<protein>
    <recommendedName>
        <fullName evidence="1">Deoxyribose-phosphate aldolase</fullName>
        <shortName evidence="1">DERA</shortName>
        <ecNumber evidence="1">4.1.2.4</ecNumber>
    </recommendedName>
    <alternativeName>
        <fullName evidence="1">2-deoxy-D-ribose 5-phosphate aldolase</fullName>
    </alternativeName>
    <alternativeName>
        <fullName evidence="1">Phosphodeoxyriboaldolase</fullName>
        <shortName evidence="1">Deoxyriboaldolase</shortName>
    </alternativeName>
</protein>
<keyword id="KW-0963">Cytoplasm</keyword>
<keyword id="KW-0456">Lyase</keyword>
<keyword id="KW-0704">Schiff base</keyword>
<dbReference type="EC" id="4.1.2.4" evidence="1"/>
<dbReference type="EMBL" id="CP000312">
    <property type="protein sequence ID" value="ABG87721.1"/>
    <property type="molecule type" value="Genomic_DNA"/>
</dbReference>
<dbReference type="RefSeq" id="WP_011592875.1">
    <property type="nucleotide sequence ID" value="NC_008262.1"/>
</dbReference>
<dbReference type="SMR" id="Q0SRC4"/>
<dbReference type="KEGG" id="cpr:CPR_2024"/>
<dbReference type="UniPathway" id="UPA00002">
    <property type="reaction ID" value="UER00468"/>
</dbReference>
<dbReference type="Proteomes" id="UP000001824">
    <property type="component" value="Chromosome"/>
</dbReference>
<dbReference type="GO" id="GO:0005737">
    <property type="term" value="C:cytoplasm"/>
    <property type="evidence" value="ECO:0007669"/>
    <property type="project" value="UniProtKB-SubCell"/>
</dbReference>
<dbReference type="GO" id="GO:0004139">
    <property type="term" value="F:deoxyribose-phosphate aldolase activity"/>
    <property type="evidence" value="ECO:0007669"/>
    <property type="project" value="UniProtKB-UniRule"/>
</dbReference>
<dbReference type="GO" id="GO:0006018">
    <property type="term" value="P:2-deoxyribose 1-phosphate catabolic process"/>
    <property type="evidence" value="ECO:0007669"/>
    <property type="project" value="UniProtKB-UniRule"/>
</dbReference>
<dbReference type="GO" id="GO:0016052">
    <property type="term" value="P:carbohydrate catabolic process"/>
    <property type="evidence" value="ECO:0007669"/>
    <property type="project" value="TreeGrafter"/>
</dbReference>
<dbReference type="GO" id="GO:0009264">
    <property type="term" value="P:deoxyribonucleotide catabolic process"/>
    <property type="evidence" value="ECO:0007669"/>
    <property type="project" value="InterPro"/>
</dbReference>
<dbReference type="CDD" id="cd00959">
    <property type="entry name" value="DeoC"/>
    <property type="match status" value="1"/>
</dbReference>
<dbReference type="FunFam" id="3.20.20.70:FF:000044">
    <property type="entry name" value="Deoxyribose-phosphate aldolase"/>
    <property type="match status" value="1"/>
</dbReference>
<dbReference type="Gene3D" id="3.20.20.70">
    <property type="entry name" value="Aldolase class I"/>
    <property type="match status" value="1"/>
</dbReference>
<dbReference type="HAMAP" id="MF_00114">
    <property type="entry name" value="DeoC_type1"/>
    <property type="match status" value="1"/>
</dbReference>
<dbReference type="InterPro" id="IPR013785">
    <property type="entry name" value="Aldolase_TIM"/>
</dbReference>
<dbReference type="InterPro" id="IPR011343">
    <property type="entry name" value="DeoC"/>
</dbReference>
<dbReference type="InterPro" id="IPR002915">
    <property type="entry name" value="DeoC/FbaB/LacD_aldolase"/>
</dbReference>
<dbReference type="InterPro" id="IPR028581">
    <property type="entry name" value="DeoC_typeI"/>
</dbReference>
<dbReference type="NCBIfam" id="TIGR00126">
    <property type="entry name" value="deoC"/>
    <property type="match status" value="1"/>
</dbReference>
<dbReference type="PANTHER" id="PTHR10889">
    <property type="entry name" value="DEOXYRIBOSE-PHOSPHATE ALDOLASE"/>
    <property type="match status" value="1"/>
</dbReference>
<dbReference type="PANTHER" id="PTHR10889:SF1">
    <property type="entry name" value="DEOXYRIBOSE-PHOSPHATE ALDOLASE"/>
    <property type="match status" value="1"/>
</dbReference>
<dbReference type="Pfam" id="PF01791">
    <property type="entry name" value="DeoC"/>
    <property type="match status" value="1"/>
</dbReference>
<dbReference type="PIRSF" id="PIRSF001357">
    <property type="entry name" value="DeoC"/>
    <property type="match status" value="1"/>
</dbReference>
<dbReference type="SMART" id="SM01133">
    <property type="entry name" value="DeoC"/>
    <property type="match status" value="1"/>
</dbReference>
<dbReference type="SUPFAM" id="SSF51569">
    <property type="entry name" value="Aldolase"/>
    <property type="match status" value="1"/>
</dbReference>
<comment type="function">
    <text evidence="1">Catalyzes a reversible aldol reaction between acetaldehyde and D-glyceraldehyde 3-phosphate to generate 2-deoxy-D-ribose 5-phosphate.</text>
</comment>
<comment type="catalytic activity">
    <reaction evidence="1">
        <text>2-deoxy-D-ribose 5-phosphate = D-glyceraldehyde 3-phosphate + acetaldehyde</text>
        <dbReference type="Rhea" id="RHEA:12821"/>
        <dbReference type="ChEBI" id="CHEBI:15343"/>
        <dbReference type="ChEBI" id="CHEBI:59776"/>
        <dbReference type="ChEBI" id="CHEBI:62877"/>
        <dbReference type="EC" id="4.1.2.4"/>
    </reaction>
</comment>
<comment type="pathway">
    <text evidence="1">Carbohydrate degradation; 2-deoxy-D-ribose 1-phosphate degradation; D-glyceraldehyde 3-phosphate and acetaldehyde from 2-deoxy-alpha-D-ribose 1-phosphate: step 2/2.</text>
</comment>
<comment type="subcellular location">
    <subcellularLocation>
        <location evidence="1">Cytoplasm</location>
    </subcellularLocation>
</comment>
<comment type="similarity">
    <text evidence="1">Belongs to the DeoC/FbaB aldolase family. DeoC type 1 subfamily.</text>
</comment>
<reference key="1">
    <citation type="journal article" date="2006" name="Genome Res.">
        <title>Skewed genomic variability in strains of the toxigenic bacterial pathogen, Clostridium perfringens.</title>
        <authorList>
            <person name="Myers G.S.A."/>
            <person name="Rasko D.A."/>
            <person name="Cheung J.K."/>
            <person name="Ravel J."/>
            <person name="Seshadri R."/>
            <person name="DeBoy R.T."/>
            <person name="Ren Q."/>
            <person name="Varga J."/>
            <person name="Awad M.M."/>
            <person name="Brinkac L.M."/>
            <person name="Daugherty S.C."/>
            <person name="Haft D.H."/>
            <person name="Dodson R.J."/>
            <person name="Madupu R."/>
            <person name="Nelson W.C."/>
            <person name="Rosovitz M.J."/>
            <person name="Sullivan S.A."/>
            <person name="Khouri H."/>
            <person name="Dimitrov G.I."/>
            <person name="Watkins K.L."/>
            <person name="Mulligan S."/>
            <person name="Benton J."/>
            <person name="Radune D."/>
            <person name="Fisher D.J."/>
            <person name="Atkins H.S."/>
            <person name="Hiscox T."/>
            <person name="Jost B.H."/>
            <person name="Billington S.J."/>
            <person name="Songer J.G."/>
            <person name="McClane B.A."/>
            <person name="Titball R.W."/>
            <person name="Rood J.I."/>
            <person name="Melville S.B."/>
            <person name="Paulsen I.T."/>
        </authorList>
    </citation>
    <scope>NUCLEOTIDE SEQUENCE [LARGE SCALE GENOMIC DNA]</scope>
    <source>
        <strain>SM101 / Type A</strain>
    </source>
</reference>
<organism>
    <name type="scientific">Clostridium perfringens (strain SM101 / Type A)</name>
    <dbReference type="NCBI Taxonomy" id="289380"/>
    <lineage>
        <taxon>Bacteria</taxon>
        <taxon>Bacillati</taxon>
        <taxon>Bacillota</taxon>
        <taxon>Clostridia</taxon>
        <taxon>Eubacteriales</taxon>
        <taxon>Clostridiaceae</taxon>
        <taxon>Clostridium</taxon>
    </lineage>
</organism>
<gene>
    <name evidence="1" type="primary">deoC</name>
    <name type="ordered locus">CPR_2024</name>
</gene>
<proteinExistence type="inferred from homology"/>
<name>DEOC_CLOPS</name>
<sequence>MDKQQLAKMIDHTILKPEADKASIEKLCKEALEYNFASVCINPTNVELAAKLLKGSEVKVCTVIGFPLGANTMEVKAFETKDAIAKGADEVDMVINIGRLKDKDYEYVEKDIKAVVDAADKKAVTKVIIETCLLTEEEKVKACELAKKAGADFVKTSTGFSTGGATPEDIKLMRETVGPDMGVKASGGVRSIEDAEAVIKNGATRIGASASIAICEGKVSDSTY</sequence>
<evidence type="ECO:0000255" key="1">
    <source>
        <dbReference type="HAMAP-Rule" id="MF_00114"/>
    </source>
</evidence>
<accession>Q0SRC4</accession>
<feature type="chain" id="PRO_1000015314" description="Deoxyribose-phosphate aldolase">
    <location>
        <begin position="1"/>
        <end position="224"/>
    </location>
</feature>
<feature type="active site" description="Proton donor/acceptor" evidence="1">
    <location>
        <position position="92"/>
    </location>
</feature>
<feature type="active site" description="Schiff-base intermediate with acetaldehyde" evidence="1">
    <location>
        <position position="155"/>
    </location>
</feature>
<feature type="active site" description="Proton donor/acceptor" evidence="1">
    <location>
        <position position="184"/>
    </location>
</feature>